<feature type="chain" id="PRO_0000053929" description="Voltage-dependent L-type calcium channel subunit alpha-1C">
    <location>
        <begin position="1"/>
        <end position="2139"/>
    </location>
</feature>
<feature type="topological domain" description="Cytoplasmic" evidence="18">
    <location>
        <begin position="1"/>
        <end position="124"/>
    </location>
</feature>
<feature type="transmembrane region" description="Helical; Name=S1 of repeat I" evidence="1">
    <location>
        <begin position="125"/>
        <end position="143"/>
    </location>
</feature>
<feature type="topological domain" description="Extracellular" evidence="18">
    <location>
        <begin position="144"/>
        <end position="158"/>
    </location>
</feature>
<feature type="transmembrane region" description="Helical; Name=S2 of repeat I" evidence="1">
    <location>
        <begin position="159"/>
        <end position="179"/>
    </location>
</feature>
<feature type="topological domain" description="Cytoplasmic" evidence="18">
    <location>
        <begin position="180"/>
        <end position="188"/>
    </location>
</feature>
<feature type="transmembrane region" description="Helical; Name=S3 of repeat I" evidence="1">
    <location>
        <begin position="189"/>
        <end position="209"/>
    </location>
</feature>
<feature type="topological domain" description="Extracellular" evidence="18">
    <location>
        <begin position="210"/>
        <end position="232"/>
    </location>
</feature>
<feature type="transmembrane region" description="Helical; Name=S4 of repeat I" evidence="1">
    <location>
        <begin position="233"/>
        <end position="251"/>
    </location>
</feature>
<feature type="topological domain" description="Cytoplasmic" evidence="18">
    <location>
        <begin position="252"/>
        <end position="268"/>
    </location>
</feature>
<feature type="transmembrane region" description="Helical; Name=S5 of repeat I" evidence="1">
    <location>
        <begin position="269"/>
        <end position="290"/>
    </location>
</feature>
<feature type="topological domain" description="Extracellular" evidence="18">
    <location>
        <begin position="291"/>
        <end position="350"/>
    </location>
</feature>
<feature type="intramembrane region" description="Pore-forming" evidence="1">
    <location>
        <begin position="351"/>
        <end position="372"/>
    </location>
</feature>
<feature type="topological domain" description="Extracellular" evidence="18">
    <location>
        <begin position="373"/>
        <end position="380"/>
    </location>
</feature>
<feature type="transmembrane region" description="Helical; Name=S6 of repeat I" evidence="1">
    <location>
        <begin position="381"/>
        <end position="401"/>
    </location>
</feature>
<feature type="topological domain" description="Cytoplasmic" evidence="18">
    <location>
        <begin position="402"/>
        <end position="524"/>
    </location>
</feature>
<feature type="transmembrane region" description="Helical; Name=S1 of repeat II" evidence="1">
    <location>
        <begin position="525"/>
        <end position="543"/>
    </location>
</feature>
<feature type="topological domain" description="Extracellular" evidence="18">
    <location>
        <begin position="544"/>
        <end position="554"/>
    </location>
</feature>
<feature type="transmembrane region" description="Helical; Name=S2 of repeat II" evidence="1">
    <location>
        <begin position="555"/>
        <end position="575"/>
    </location>
</feature>
<feature type="topological domain" description="Cytoplasmic" evidence="18">
    <location>
        <begin position="576"/>
        <end position="586"/>
    </location>
</feature>
<feature type="transmembrane region" description="Helical; Name=S3 of repeat II" evidence="1">
    <location>
        <begin position="587"/>
        <end position="606"/>
    </location>
</feature>
<feature type="topological domain" description="Extracellular" evidence="18">
    <location>
        <begin position="607"/>
        <end position="615"/>
    </location>
</feature>
<feature type="transmembrane region" description="Helical; Name=S4 of repeat II" evidence="1">
    <location>
        <begin position="616"/>
        <end position="634"/>
    </location>
</feature>
<feature type="topological domain" description="Cytoplasmic" evidence="18">
    <location>
        <begin position="635"/>
        <end position="653"/>
    </location>
</feature>
<feature type="transmembrane region" description="Helical; Name=S5 of repeat II" evidence="1">
    <location>
        <begin position="654"/>
        <end position="673"/>
    </location>
</feature>
<feature type="topological domain" description="Extracellular" evidence="18">
    <location>
        <begin position="674"/>
        <end position="693"/>
    </location>
</feature>
<feature type="intramembrane region" description="Pore-forming" evidence="1">
    <location>
        <begin position="694"/>
        <end position="715"/>
    </location>
</feature>
<feature type="topological domain" description="Extracellular" evidence="18">
    <location>
        <begin position="716"/>
        <end position="725"/>
    </location>
</feature>
<feature type="transmembrane region" description="Helical; Name=S6 of repeat II" evidence="1">
    <location>
        <begin position="726"/>
        <end position="745"/>
    </location>
</feature>
<feature type="topological domain" description="Cytoplasmic" evidence="18">
    <location>
        <begin position="746"/>
        <end position="900"/>
    </location>
</feature>
<feature type="transmembrane region" description="Helical; Name=S1 of repeat III" evidence="1">
    <location>
        <begin position="901"/>
        <end position="919"/>
    </location>
</feature>
<feature type="topological domain" description="Extracellular" evidence="18">
    <location>
        <begin position="920"/>
        <end position="931"/>
    </location>
</feature>
<feature type="transmembrane region" description="Helical; Name=S2 of repeat III" evidence="1">
    <location>
        <begin position="932"/>
        <end position="951"/>
    </location>
</feature>
<feature type="topological domain" description="Cytoplasmic" evidence="18">
    <location>
        <begin position="952"/>
        <end position="967"/>
    </location>
</feature>
<feature type="transmembrane region" description="Helical; Name=S3 of repeat III" evidence="1">
    <location>
        <begin position="968"/>
        <end position="986"/>
    </location>
</feature>
<feature type="topological domain" description="Extracellular" evidence="18">
    <location>
        <begin position="987"/>
        <end position="993"/>
    </location>
</feature>
<feature type="transmembrane region" description="Helical; Name=S4 of repeat III" evidence="1">
    <location>
        <begin position="994"/>
        <end position="1012"/>
    </location>
</feature>
<feature type="topological domain" description="Cytoplasmic" evidence="18">
    <location>
        <begin position="1013"/>
        <end position="1031"/>
    </location>
</feature>
<feature type="transmembrane region" description="Helical; Name=S5 of repeat III" evidence="1">
    <location>
        <begin position="1032"/>
        <end position="1051"/>
    </location>
</feature>
<feature type="topological domain" description="Extracellular" evidence="18">
    <location>
        <begin position="1052"/>
        <end position="1101"/>
    </location>
</feature>
<feature type="intramembrane region" description="Pore-forming" evidence="1">
    <location>
        <begin position="1102"/>
        <end position="1122"/>
    </location>
</feature>
<feature type="topological domain" description="Extracellular" evidence="18">
    <location>
        <begin position="1123"/>
        <end position="1139"/>
    </location>
</feature>
<feature type="transmembrane region" description="Helical; Name=S6 of repeat III" evidence="1">
    <location>
        <begin position="1140"/>
        <end position="1161"/>
    </location>
</feature>
<feature type="topological domain" description="Cytoplasmic" evidence="18">
    <location>
        <begin position="1162"/>
        <end position="1219"/>
    </location>
</feature>
<feature type="transmembrane region" description="Helical; Name=S1 of repeat IV" evidence="1">
    <location>
        <begin position="1220"/>
        <end position="1241"/>
    </location>
</feature>
<feature type="topological domain" description="Extracellular" evidence="18">
    <location>
        <begin position="1242"/>
        <end position="1249"/>
    </location>
</feature>
<feature type="transmembrane region" description="Helical; Name=S2 of repeat IV" evidence="1">
    <location>
        <begin position="1250"/>
        <end position="1271"/>
    </location>
</feature>
<feature type="topological domain" description="Cytoplasmic" evidence="18">
    <location>
        <begin position="1272"/>
        <end position="1281"/>
    </location>
</feature>
<feature type="transmembrane region" description="Helical; Name=S3 of repeat IV" evidence="1">
    <location>
        <begin position="1282"/>
        <end position="1301"/>
    </location>
</feature>
<feature type="topological domain" description="Extracellular" evidence="18">
    <location>
        <begin position="1302"/>
        <end position="1324"/>
    </location>
</feature>
<feature type="transmembrane region" description="Helical; Name=S4 of repeat IV" evidence="1">
    <location>
        <begin position="1325"/>
        <end position="1343"/>
    </location>
</feature>
<feature type="topological domain" description="Cytoplasmic" evidence="18">
    <location>
        <begin position="1344"/>
        <end position="1361"/>
    </location>
</feature>
<feature type="transmembrane region" description="Helical; Name=S5 of repeat IV" evidence="1">
    <location>
        <begin position="1362"/>
        <end position="1382"/>
    </location>
</feature>
<feature type="topological domain" description="Extracellular" evidence="18">
    <location>
        <begin position="1383"/>
        <end position="1404"/>
    </location>
</feature>
<feature type="intramembrane region" description="Pore-forming" evidence="1">
    <location>
        <begin position="1405"/>
        <end position="1423"/>
    </location>
</feature>
<feature type="topological domain" description="Extracellular" evidence="18">
    <location>
        <begin position="1424"/>
        <end position="1451"/>
    </location>
</feature>
<feature type="transmembrane region" description="Helical; Name=S6 of repeat IV" evidence="1">
    <location>
        <begin position="1452"/>
        <end position="1476"/>
    </location>
</feature>
<feature type="topological domain" description="Cytoplasmic" evidence="18">
    <location>
        <begin position="1477"/>
        <end position="2139"/>
    </location>
</feature>
<feature type="repeat" description="I">
    <location>
        <begin position="111"/>
        <end position="408"/>
    </location>
</feature>
<feature type="repeat" description="II">
    <location>
        <begin position="510"/>
        <end position="756"/>
    </location>
</feature>
<feature type="repeat" description="III">
    <location>
        <begin position="887"/>
        <end position="1169"/>
    </location>
</feature>
<feature type="repeat" description="IV">
    <location>
        <begin position="1206"/>
        <end position="1479"/>
    </location>
</feature>
<feature type="region of interest" description="Disordered" evidence="6">
    <location>
        <begin position="1"/>
        <end position="20"/>
    </location>
</feature>
<feature type="region of interest" description="Calmodulin-binding" evidence="4">
    <location>
        <begin position="47"/>
        <end position="68"/>
    </location>
</feature>
<feature type="region of interest" description="Disordered" evidence="6">
    <location>
        <begin position="73"/>
        <end position="98"/>
    </location>
</feature>
<feature type="region of interest" description="AID/alpha-interaction domain; mediates interaction with the beta subunit" evidence="3">
    <location>
        <begin position="428"/>
        <end position="445"/>
    </location>
</feature>
<feature type="region of interest" description="Disordered" evidence="6">
    <location>
        <begin position="449"/>
        <end position="481"/>
    </location>
</feature>
<feature type="region of interest" description="Disordered" evidence="6">
    <location>
        <begin position="764"/>
        <end position="861"/>
    </location>
</feature>
<feature type="region of interest" description="Interaction with STAC2" evidence="4">
    <location>
        <begin position="829"/>
        <end position="876"/>
    </location>
</feature>
<feature type="region of interest" description="Dihydropyridine binding" evidence="1">
    <location>
        <begin position="1089"/>
        <end position="1178"/>
    </location>
</feature>
<feature type="region of interest" description="Dihydropyridine binding" evidence="1">
    <location>
        <begin position="1430"/>
        <end position="1498"/>
    </location>
</feature>
<feature type="region of interest" description="Phenylalkylamine binding" evidence="1">
    <location>
        <begin position="1444"/>
        <end position="1486"/>
    </location>
</feature>
<feature type="region of interest" description="Calmodulin-binding" evidence="4">
    <location>
        <begin position="1611"/>
        <end position="1644"/>
    </location>
</feature>
<feature type="region of interest" description="Important for interaction with STAC1, STAC2 and STAC3" evidence="2">
    <location>
        <begin position="1611"/>
        <end position="1638"/>
    </location>
</feature>
<feature type="region of interest" description="Calmodulin-binding IQ region" evidence="4">
    <location>
        <begin position="1617"/>
        <end position="1637"/>
    </location>
</feature>
<feature type="region of interest" description="Important for localization in at the junctional membrane" evidence="2">
    <location>
        <begin position="1651"/>
        <end position="1670"/>
    </location>
</feature>
<feature type="region of interest" description="Disordered" evidence="6">
    <location>
        <begin position="1732"/>
        <end position="1773"/>
    </location>
</feature>
<feature type="region of interest" description="Disordered" evidence="6">
    <location>
        <begin position="1940"/>
        <end position="1966"/>
    </location>
</feature>
<feature type="short sequence motif" description="Selectivity filter of repeat I" evidence="1">
    <location>
        <begin position="361"/>
        <end position="364"/>
    </location>
</feature>
<feature type="short sequence motif" description="Selectivity filter of repeat II" evidence="1">
    <location>
        <begin position="704"/>
        <end position="707"/>
    </location>
</feature>
<feature type="short sequence motif" description="Selectivity filter of repeat III" evidence="1">
    <location>
        <begin position="1113"/>
        <end position="1116"/>
    </location>
</feature>
<feature type="short sequence motif" description="Selectivity filter of repeat IV" evidence="1">
    <location>
        <begin position="1414"/>
        <end position="1417"/>
    </location>
</feature>
<feature type="compositionally biased region" description="Basic residues" evidence="6">
    <location>
        <begin position="80"/>
        <end position="91"/>
    </location>
</feature>
<feature type="compositionally biased region" description="Polar residues" evidence="6">
    <location>
        <begin position="465"/>
        <end position="478"/>
    </location>
</feature>
<feature type="compositionally biased region" description="Basic and acidic residues" evidence="6">
    <location>
        <begin position="783"/>
        <end position="806"/>
    </location>
</feature>
<feature type="compositionally biased region" description="Acidic residues" evidence="6">
    <location>
        <begin position="843"/>
        <end position="852"/>
    </location>
</feature>
<feature type="compositionally biased region" description="Polar residues" evidence="6">
    <location>
        <begin position="1732"/>
        <end position="1741"/>
    </location>
</feature>
<feature type="compositionally biased region" description="Polar residues" evidence="6">
    <location>
        <begin position="1751"/>
        <end position="1763"/>
    </location>
</feature>
<feature type="compositionally biased region" description="Low complexity" evidence="6">
    <location>
        <begin position="1764"/>
        <end position="1773"/>
    </location>
</feature>
<feature type="compositionally biased region" description="Pro residues" evidence="6">
    <location>
        <begin position="1947"/>
        <end position="1957"/>
    </location>
</feature>
<feature type="binding site" evidence="1">
    <location>
        <position position="363"/>
    </location>
    <ligand>
        <name>Ca(2+)</name>
        <dbReference type="ChEBI" id="CHEBI:29108"/>
    </ligand>
</feature>
<feature type="binding site" evidence="1">
    <location>
        <position position="706"/>
    </location>
    <ligand>
        <name>Ca(2+)</name>
        <dbReference type="ChEBI" id="CHEBI:29108"/>
    </ligand>
</feature>
<feature type="binding site" evidence="1">
    <location>
        <position position="1115"/>
    </location>
    <ligand>
        <name>Ca(2+)</name>
        <dbReference type="ChEBI" id="CHEBI:29108"/>
    </ligand>
</feature>
<feature type="modified residue" description="Phosphoserine" evidence="20">
    <location>
        <position position="469"/>
    </location>
</feature>
<feature type="modified residue" description="Phosphothreonine" evidence="20">
    <location>
        <position position="476"/>
    </location>
</feature>
<feature type="modified residue" description="Phosphoserine" evidence="20">
    <location>
        <position position="808"/>
    </location>
</feature>
<feature type="modified residue" description="Phosphoserine" evidence="20">
    <location>
        <position position="815"/>
    </location>
</feature>
<feature type="modified residue" description="Phosphoserine" evidence="19 20">
    <location>
        <position position="1670"/>
    </location>
</feature>
<feature type="modified residue" description="Phosphoserine" evidence="20">
    <location>
        <position position="1691"/>
    </location>
</feature>
<feature type="modified residue" description="Phosphoserine; by PKA" evidence="14 15">
    <location>
        <position position="1897"/>
    </location>
</feature>
<feature type="glycosylation site" description="N-linked (GlcNAc...) asparagine" evidence="5">
    <location>
        <position position="153"/>
    </location>
</feature>
<feature type="glycosylation site" description="N-linked (GlcNAc...) asparagine" evidence="5">
    <location>
        <position position="328"/>
    </location>
</feature>
<feature type="glycosylation site" description="N-linked (GlcNAc...) asparagine" evidence="5">
    <location>
        <position position="1388"/>
    </location>
</feature>
<feature type="glycosylation site" description="N-linked (GlcNAc...) asparagine" evidence="5">
    <location>
        <position position="1439"/>
    </location>
</feature>
<feature type="disulfide bond" evidence="1">
    <location>
        <begin position="298"/>
        <end position="326"/>
    </location>
</feature>
<feature type="disulfide bond" evidence="1">
    <location>
        <begin position="316"/>
        <end position="332"/>
    </location>
</feature>
<feature type="disulfide bond" evidence="1">
    <location>
        <begin position="1058"/>
        <end position="1069"/>
    </location>
</feature>
<feature type="disulfide bond" evidence="1">
    <location>
        <begin position="1431"/>
        <end position="1447"/>
    </location>
</feature>
<feature type="splice variant" id="VSP_000896" description="In isoform 3." evidence="17">
    <location>
        <begin position="1"/>
        <end position="264"/>
    </location>
</feature>
<feature type="splice variant" id="VSP_000897" description="In isoform 3." evidence="17">
    <original>MQDAMGYELPWVYFVSLVIF</original>
    <variation>VNDAVGRDWPWIYFVTLIII</variation>
    <location>
        <begin position="372"/>
        <end position="391"/>
    </location>
</feature>
<feature type="splice variant" id="VSP_000898" description="In isoform 3." evidence="17">
    <original>M</original>
    <variation>RGAPAGLHDQKKGKFAWFSHSTETHV</variation>
    <location>
        <position position="464"/>
    </location>
</feature>
<feature type="splice variant" id="VSP_000899" description="In isoform 3." evidence="17">
    <location>
        <begin position="932"/>
        <end position="951"/>
    </location>
</feature>
<feature type="splice variant" id="VSP_000900" description="In isoform 2." evidence="16">
    <original>GYFSDPWNVFDFLIVIGSIIDVILSETN</original>
    <variation>HYFCDAWNTFDALIVVGSIVDIAITEVH</variation>
    <location>
        <begin position="1277"/>
        <end position="1304"/>
    </location>
</feature>
<feature type="splice variant" id="VSP_000901" description="In isoform 2 and isoform 3." evidence="16 17">
    <location>
        <begin position="1305"/>
        <end position="1315"/>
    </location>
</feature>
<feature type="mutagenesis site" description="Expected to abolish a phosphorylation site. Decreased channel activity. No effect on phosphorylation at S-1897. Causes heart hypertrophy and decreased exercise tolerance in adult mice." evidence="14">
    <original>S</original>
    <variation>A</variation>
    <location>
        <position position="1670"/>
    </location>
</feature>
<feature type="mutagenesis site" description="Strongly decreased channel activity due to decreased expression at the cell membrane, leading to hypertrophy of the right heart ventricle, heart failure and perinatal death; when associated with 1797-P--L-2139 DEL." evidence="12">
    <original>HGP</original>
    <variation>LSK</variation>
    <location>
        <begin position="1794"/>
        <end position="1796"/>
    </location>
</feature>
<feature type="mutagenesis site" description="Strongly decreased channel activity due to decreased expression at the cell membrane, leading to hypertrophy of the right heart ventricle, heart failure and perinatal death; when associated with 1794-L--K-1796." evidence="12">
    <location>
        <begin position="1797"/>
        <end position="2139"/>
    </location>
</feature>
<feature type="mutagenesis site" description="Loss of phosphorylation site. Abolishes increased vasoconstriction in response to elevated blood glucose." evidence="15">
    <original>S</original>
    <variation>A</variation>
    <location>
        <position position="1897"/>
    </location>
</feature>
<feature type="sequence conflict" description="In Ref. 4; AAA62612." evidence="18" ref="4">
    <original>E</original>
    <variation>K</variation>
    <location>
        <position position="310"/>
    </location>
</feature>
<feature type="sequence conflict" description="In Ref. 4; AAA62612." evidence="18" ref="4">
    <original>E</original>
    <variation>D</variation>
    <location>
        <position position="477"/>
    </location>
</feature>
<feature type="sequence conflict" description="In Ref. 4; AAA62612." evidence="18" ref="4">
    <original>V</original>
    <variation>D</variation>
    <location>
        <position position="555"/>
    </location>
</feature>
<feature type="sequence conflict" description="In Ref. 4; AAA62612." evidence="18" ref="4">
    <original>AD</original>
    <variation>GS</variation>
    <location>
        <begin position="811"/>
        <end position="812"/>
    </location>
</feature>
<feature type="sequence conflict" description="In Ref. 4; AAA62612." evidence="18" ref="4">
    <original>N</original>
    <variation>H</variation>
    <location>
        <position position="822"/>
    </location>
</feature>
<feature type="sequence conflict" description="In Ref. 4; AAA62612." evidence="18" ref="4">
    <original>D</original>
    <variation>A</variation>
    <location>
        <position position="825"/>
    </location>
</feature>
<feature type="sequence conflict" description="In Ref. 4; AAA62612." evidence="18" ref="4">
    <original>N</original>
    <variation>P</variation>
    <location>
        <position position="831"/>
    </location>
</feature>
<feature type="sequence conflict" description="In Ref. 3; AAA37351." evidence="18" ref="3">
    <original>HSNPD</original>
    <variation>TPTQT</variation>
    <location>
        <begin position="837"/>
        <end position="841"/>
    </location>
</feature>
<feature type="sequence conflict" description="In Ref. 3; AAA37351." evidence="18" ref="3">
    <original>GNADY</original>
    <variation>FYFDI</variation>
    <location>
        <begin position="934"/>
        <end position="938"/>
    </location>
</feature>
<feature type="sequence conflict" description="In Ref. 3; AAA37351." evidence="18" ref="3">
    <original>S</original>
    <variation>T</variation>
    <location>
        <position position="942"/>
    </location>
</feature>
<feature type="sequence conflict" description="In Ref. 3; AAA37351." evidence="18" ref="3">
    <original>L</original>
    <variation>I</variation>
    <location>
        <position position="946"/>
    </location>
</feature>
<feature type="sequence conflict" description="In Ref. 3; AAA37351." evidence="18" ref="3">
    <original>I</original>
    <variation>A</variation>
    <location>
        <position position="949"/>
    </location>
</feature>
<feature type="sequence conflict" description="In Ref. 4; AAA62612." evidence="18" ref="4">
    <original>VS</original>
    <variation>LC</variation>
    <location>
        <begin position="977"/>
        <end position="978"/>
    </location>
</feature>
<feature type="sequence conflict" description="In Ref. 4; AAA62612." evidence="18" ref="4">
    <original>T</original>
    <variation>A</variation>
    <location>
        <position position="1065"/>
    </location>
</feature>
<feature type="sequence conflict" description="In Ref. 4; AAA62612." evidence="18" ref="4">
    <original>E</original>
    <variation>K</variation>
    <location>
        <position position="1507"/>
    </location>
</feature>
<feature type="sequence conflict" description="In Ref. 4; AAA62612." evidence="18" ref="4">
    <original>Q</original>
    <variation>H</variation>
    <location>
        <position position="1525"/>
    </location>
</feature>
<feature type="sequence conflict" description="In Ref. 4; AAA62612." evidence="18" ref="4">
    <original>K</original>
    <variation>E</variation>
    <location>
        <position position="1633"/>
    </location>
</feature>
<feature type="sequence conflict" description="In Ref. 4; AAA62612." evidence="18" ref="4">
    <original>G</original>
    <variation>A</variation>
    <location>
        <position position="1959"/>
    </location>
</feature>
<feature type="sequence conflict" description="In Ref. 4; AAA62612." evidence="18" ref="4">
    <original>RP</original>
    <variation>ST</variation>
    <location>
        <begin position="1963"/>
        <end position="1964"/>
    </location>
</feature>
<feature type="sequence conflict" description="In Ref. 4; AAA62612." evidence="18" ref="4">
    <original>T</original>
    <variation>H</variation>
    <location>
        <position position="1970"/>
    </location>
</feature>
<feature type="sequence conflict" description="In Ref. 4; AAA62612." evidence="18" ref="4">
    <original>E</original>
    <variation>K</variation>
    <location>
        <position position="1974"/>
    </location>
</feature>
<feature type="sequence conflict" description="In Ref. 4; AAA62612." evidence="18" ref="4">
    <original>A</original>
    <variation>R</variation>
    <location>
        <position position="2086"/>
    </location>
</feature>
<feature type="sequence conflict" description="In Ref. 4; AAA62612." evidence="18" ref="4">
    <original>F</original>
    <variation>L</variation>
    <location>
        <position position="2097"/>
    </location>
</feature>
<feature type="sequence conflict" description="In Ref. 4; AAA62612." evidence="18" ref="4">
    <original>A</original>
    <variation>V</variation>
    <location>
        <position position="2110"/>
    </location>
</feature>
<reference key="1">
    <citation type="journal article" date="1992" name="J. Biol. Chem.">
        <title>Expression of a cDNA for a neuronal calcium channel alpha1 subunit enhances secretion from adrenal chromaffin cells.</title>
        <authorList>
            <person name="Ma W.-J."/>
            <person name="Holz R.W."/>
            <person name="Uhler M.D."/>
        </authorList>
    </citation>
    <scope>NUCLEOTIDE SEQUENCE [MRNA]</scope>
    <scope>ALTERNATIVE SPLICING</scope>
    <scope>TISSUE SPECIFICITY</scope>
    <source>
        <tissue>Brain</tissue>
    </source>
</reference>
<reference key="2">
    <citation type="journal article" date="1990" name="J. Biol. Chem.">
        <title>Molecular diversity of L-type calcium channels. Evidence for alternative splicing of the transcripts of three non-allelic genes.</title>
        <authorList>
            <person name="Perez-Reyes E."/>
            <person name="Wei X."/>
            <person name="Castellano A."/>
            <person name="Birnbaumer L."/>
        </authorList>
    </citation>
    <scope>NUCLEOTIDE SEQUENCE [MRNA] OF 1162-1455 (ISOFORMS 1 AND 2)</scope>
    <source>
        <strain>ICR</strain>
        <tissue>Ovary</tissue>
    </source>
</reference>
<reference key="3">
    <citation type="submission" date="1993-01" db="EMBL/GenBank/DDBJ databases">
        <authorList>
            <person name="Chaudhari N."/>
        </authorList>
    </citation>
    <scope>NUCLEOTIDE SEQUENCE [MRNA] OF 762-1070</scope>
</reference>
<reference key="4">
    <citation type="journal article" date="1995" name="J. Biol. Chem.">
        <title>Cloning and expression of a novel truncated calcium channel from non-excitable cells.</title>
        <authorList>
            <person name="Ma Y."/>
            <person name="Kobrinsky E."/>
            <person name="Marks A.R."/>
        </authorList>
    </citation>
    <scope>NUCLEOTIDE SEQUENCE [MRNA] OF 265-2139 (ISOFORM 3)</scope>
    <source>
        <strain>DBA/2J</strain>
        <tissue>Erythroleukemia</tissue>
    </source>
</reference>
<reference key="5">
    <citation type="journal article" date="2000" name="J. Biol. Chem.">
        <title>Functional embryonic cardiomyocytes after disruption of the L-type alpha1C (Cav1.2) calcium channel gene in the mouse.</title>
        <authorList>
            <person name="Seisenberger C."/>
            <person name="Specht V."/>
            <person name="Welling A."/>
            <person name="Platzer J."/>
            <person name="Pfeifer A."/>
            <person name="Kuehbandner S."/>
            <person name="Striessnig J."/>
            <person name="Klugbauer N."/>
            <person name="Feil R."/>
            <person name="Hofmann F."/>
        </authorList>
    </citation>
    <scope>DISRUPTION PHENOTYPE</scope>
    <scope>TISSUE SPECIFICITY</scope>
    <scope>FUNCTION</scope>
    <scope>TRANSPORTER ACTIVITY</scope>
</reference>
<reference key="6">
    <citation type="journal article" date="2003" name="EMBO J.">
        <title>Dominant role of smooth muscle L-type calcium channel Cav1.2 for blood pressure regulation.</title>
        <authorList>
            <person name="Moosmang S."/>
            <person name="Schulla V."/>
            <person name="Welling A."/>
            <person name="Feil R."/>
            <person name="Feil S."/>
            <person name="Wegener J.W."/>
            <person name="Hofmann F."/>
            <person name="Klugbauer N."/>
        </authorList>
    </citation>
    <scope>FUNCTION</scope>
    <scope>ACTIVITY REGULATION</scope>
    <scope>SUBCELLULAR LOCATION</scope>
    <scope>TISSUE SPECIFICITY</scope>
    <scope>TRANSPORTER ACTIVITY</scope>
</reference>
<reference key="7">
    <citation type="journal article" date="2008" name="Invest. Ophthalmol. Vis. Sci.">
        <title>Characterization of Ca2+-binding protein 5 knockout mouse retina.</title>
        <authorList>
            <person name="Rieke F."/>
            <person name="Lee A."/>
            <person name="Haeseleer F."/>
        </authorList>
    </citation>
    <scope>INTERACTION WITH CABP5</scope>
    <scope>TISSUE SPECIFICITY</scope>
    <scope>FUNCTION</scope>
    <scope>SUBCELLULAR LOCATION</scope>
    <scope>TRANSPORTER ACTIVITY</scope>
</reference>
<reference key="8">
    <citation type="journal article" date="2010" name="Cell">
        <title>A tissue-specific atlas of mouse protein phosphorylation and expression.</title>
        <authorList>
            <person name="Huttlin E.L."/>
            <person name="Jedrychowski M.P."/>
            <person name="Elias J.E."/>
            <person name="Goswami T."/>
            <person name="Rad R."/>
            <person name="Beausoleil S.A."/>
            <person name="Villen J."/>
            <person name="Haas W."/>
            <person name="Sowa M.E."/>
            <person name="Gygi S.P."/>
        </authorList>
    </citation>
    <scope>PHOSPHORYLATION [LARGE SCALE ANALYSIS] AT SER-469; THR-476; SER-808; SER-815; SER-1670 AND SER-1691</scope>
    <scope>IDENTIFICATION BY MASS SPECTROMETRY [LARGE SCALE ANALYSIS]</scope>
    <source>
        <tissue>Brain</tissue>
        <tissue>Heart</tissue>
        <tissue>Lung</tissue>
    </source>
</reference>
<reference key="9">
    <citation type="journal article" date="2010" name="Nat. Med.">
        <title>CIB1 is a regulator of pathological cardiac hypertrophy.</title>
        <authorList>
            <person name="Heineke J."/>
            <person name="Auger-Messier M."/>
            <person name="Correll R.N."/>
            <person name="Xu J."/>
            <person name="Benard M.J."/>
            <person name="Yuan W."/>
            <person name="Drexler H."/>
            <person name="Parise L.V."/>
            <person name="Molkentin J.D."/>
        </authorList>
    </citation>
    <scope>INTERACTION WITH CIB1</scope>
</reference>
<reference key="10">
    <citation type="journal article" date="2011" name="J. Biol. Chem.">
        <title>Deletion of the distal C terminus of CaV1.2 channels leads to loss of beta-adrenergic regulation and heart failure in vivo.</title>
        <authorList>
            <person name="Fu Y."/>
            <person name="Westenbroek R.E."/>
            <person name="Yu F.H."/>
            <person name="Clark J.P. III"/>
            <person name="Marshall M.R."/>
            <person name="Scheuer T."/>
            <person name="Catterall W.A."/>
        </authorList>
    </citation>
    <scope>FUNCTION</scope>
    <scope>ACTIVITY REGULATION</scope>
    <scope>SUBCELLULAR LOCATION</scope>
    <scope>TISSUE SPECIFICITY</scope>
    <scope>MUTAGENESIS OF 1794-HIS--PRO-1796 AND 1797-PRO--LEU-2139</scope>
    <scope>TRANSPORTER ACTIVITY</scope>
</reference>
<reference key="11">
    <citation type="journal article" date="2012" name="Proc. Natl. Acad. Sci. U.S.A.">
        <title>Extreme sarcoplasmic reticulum volume loss and compensatory T-tubule remodeling after Serca2 knockout.</title>
        <authorList>
            <person name="Swift F."/>
            <person name="Franzini-Armstrong C."/>
            <person name="Oeyehaug L."/>
            <person name="Enger U.H."/>
            <person name="Andersson K.B."/>
            <person name="Christensen G."/>
            <person name="Sejersted O.M."/>
            <person name="Louch W.E."/>
        </authorList>
    </citation>
    <scope>SUBCELLULAR LOCATION</scope>
</reference>
<reference key="12">
    <citation type="journal article" date="2014" name="Proc. Natl. Acad. Sci. U.S.A.">
        <title>Basal and beta-adrenergic regulation of the cardiac calcium channel CaV1.2 requires phosphorylation of serine 1700.</title>
        <authorList>
            <person name="Fu Y."/>
            <person name="Westenbroek R.E."/>
            <person name="Scheuer T."/>
            <person name="Catterall W.A."/>
        </authorList>
    </citation>
    <scope>FUNCTION</scope>
    <scope>SUBCELLULAR LOCATION</scope>
    <scope>MUTAGENESIS OF SER-1670</scope>
    <scope>PHOSPHORYLATION AT SER-1670 AND SER-1897</scope>
    <scope>TRANSPORTER ACTIVITY</scope>
</reference>
<reference key="13">
    <citation type="journal article" date="2017" name="Sci. Signal.">
        <title>Ser1928 phosphorylation by PKA stimulates the L-type Ca2+ channel CaV1.2 and vasoconstriction during acute hyperglycemia and diabetes.</title>
        <authorList>
            <person name="Nystoriak M.A."/>
            <person name="Nieves-Cintron M."/>
            <person name="Patriarchi T."/>
            <person name="Buonarati O.R."/>
            <person name="Prada M.P."/>
            <person name="Morotti S."/>
            <person name="Grandi E."/>
            <person name="Fernandes J.D."/>
            <person name="Forbush K."/>
            <person name="Hofmann F."/>
            <person name="Sasse K.C."/>
            <person name="Scott J.D."/>
            <person name="Ward S.M."/>
            <person name="Hell J.W."/>
            <person name="Navedo M.F."/>
        </authorList>
    </citation>
    <scope>FUNCTION</scope>
    <scope>SUBCELLULAR LOCATION</scope>
    <scope>PHOSPHORYLATION AT SER-1897 BY PKA</scope>
    <scope>MUTAGENESIS OF SER-1897</scope>
    <scope>TRANSPORTER ACTIVITY</scope>
</reference>
<protein>
    <recommendedName>
        <fullName>Voltage-dependent L-type calcium channel subunit alpha-1C</fullName>
    </recommendedName>
    <alternativeName>
        <fullName>Calcium channel, L type, alpha-1 polypeptide, isoform 1, cardiac muscle</fullName>
    </alternativeName>
    <alternativeName>
        <fullName>MELC-CC</fullName>
    </alternativeName>
    <alternativeName>
        <fullName>Mouse brain class C</fullName>
        <shortName>MBC</shortName>
    </alternativeName>
    <alternativeName>
        <fullName>Voltage-gated calcium channel subunit alpha Cav1.2</fullName>
    </alternativeName>
</protein>
<gene>
    <name type="primary">Cacna1c</name>
    <name type="synonym">Cach2</name>
    <name type="synonym">Cacn2</name>
    <name type="synonym">Cacnl1a1</name>
    <name type="synonym">Cchl1a1</name>
</gene>
<name>CAC1C_MOUSE</name>
<dbReference type="EMBL" id="L01776">
    <property type="protein sequence ID" value="AAB59633.1"/>
    <property type="molecule type" value="mRNA"/>
</dbReference>
<dbReference type="EMBL" id="M57973">
    <property type="protein sequence ID" value="AAA63291.1"/>
    <property type="molecule type" value="mRNA"/>
</dbReference>
<dbReference type="EMBL" id="L06233">
    <property type="protein sequence ID" value="AAA37351.1"/>
    <property type="molecule type" value="mRNA"/>
</dbReference>
<dbReference type="EMBL" id="U17869">
    <property type="protein sequence ID" value="AAA62612.1"/>
    <property type="molecule type" value="mRNA"/>
</dbReference>
<dbReference type="CCDS" id="CCDS71821.1">
    <molecule id="Q01815-3"/>
</dbReference>
<dbReference type="CCDS" id="CCDS80590.1">
    <molecule id="Q01815-1"/>
</dbReference>
<dbReference type="PIR" id="A44467">
    <property type="entry name" value="A44467"/>
</dbReference>
<dbReference type="RefSeq" id="NP_001153005.1">
    <molecule id="Q01815-1"/>
    <property type="nucleotide sequence ID" value="NM_001159533.2"/>
</dbReference>
<dbReference type="RefSeq" id="NP_001277264.1">
    <molecule id="Q01815-3"/>
    <property type="nucleotide sequence ID" value="NM_001290335.1"/>
</dbReference>
<dbReference type="BMRB" id="Q01815"/>
<dbReference type="SMR" id="Q01815"/>
<dbReference type="BioGRID" id="198432">
    <property type="interactions" value="17"/>
</dbReference>
<dbReference type="ComplexPortal" id="CPX-3194">
    <property type="entry name" value="Cav1.2 voltage-gated calcium channel complex, CACNA2D1-CACNB2 variant"/>
</dbReference>
<dbReference type="CORUM" id="Q01815"/>
<dbReference type="DIP" id="DIP-32232N"/>
<dbReference type="FunCoup" id="Q01815">
    <property type="interactions" value="1162"/>
</dbReference>
<dbReference type="IntAct" id="Q01815">
    <property type="interactions" value="92"/>
</dbReference>
<dbReference type="MINT" id="Q01815"/>
<dbReference type="STRING" id="10090.ENSMUSP00000108413"/>
<dbReference type="BindingDB" id="Q01815"/>
<dbReference type="ChEMBL" id="CHEMBL2529"/>
<dbReference type="DrugCentral" id="Q01815"/>
<dbReference type="GuidetoPHARMACOLOGY" id="529"/>
<dbReference type="TCDB" id="1.A.1.11.6">
    <property type="family name" value="the voltage-gated ion channel (vic) superfamily"/>
</dbReference>
<dbReference type="GlyCosmos" id="Q01815">
    <property type="glycosylation" value="4 sites, No reported glycans"/>
</dbReference>
<dbReference type="GlyGen" id="Q01815">
    <property type="glycosylation" value="7 sites, 2 N-linked glycans (2 sites), 1 O-linked glycan (1 site)"/>
</dbReference>
<dbReference type="iPTMnet" id="Q01815"/>
<dbReference type="PhosphoSitePlus" id="Q01815"/>
<dbReference type="SwissPalm" id="Q01815"/>
<dbReference type="jPOST" id="Q01815"/>
<dbReference type="PaxDb" id="10090-ENSMUSP00000108413"/>
<dbReference type="PeptideAtlas" id="Q01815"/>
<dbReference type="ProteomicsDB" id="273821">
    <molecule id="Q01815-1"/>
</dbReference>
<dbReference type="ProteomicsDB" id="273822">
    <molecule id="Q01815-2"/>
</dbReference>
<dbReference type="ProteomicsDB" id="273823">
    <molecule id="Q01815-3"/>
</dbReference>
<dbReference type="ABCD" id="Q01815">
    <property type="antibodies" value="2 sequenced antibodies"/>
</dbReference>
<dbReference type="Antibodypedia" id="22118">
    <property type="antibodies" value="527 antibodies from 39 providers"/>
</dbReference>
<dbReference type="DNASU" id="12288"/>
<dbReference type="Ensembl" id="ENSMUST00000075591.13">
    <molecule id="Q01815-1"/>
    <property type="protein sequence ID" value="ENSMUSP00000075021.8"/>
    <property type="gene ID" value="ENSMUSG00000051331.17"/>
</dbReference>
<dbReference type="Ensembl" id="ENSMUST00000078320.14">
    <molecule id="Q01815-1"/>
    <property type="protein sequence ID" value="ENSMUSP00000077433.9"/>
    <property type="gene ID" value="ENSMUSG00000051331.17"/>
</dbReference>
<dbReference type="Ensembl" id="ENSMUST00000112825.9">
    <molecule id="Q01815-3"/>
    <property type="protein sequence ID" value="ENSMUSP00000108444.3"/>
    <property type="gene ID" value="ENSMUSG00000051331.17"/>
</dbReference>
<dbReference type="GeneID" id="12288"/>
<dbReference type="KEGG" id="mmu:12288"/>
<dbReference type="UCSC" id="uc009dls.3">
    <molecule id="Q01815-3"/>
    <property type="organism name" value="mouse"/>
</dbReference>
<dbReference type="UCSC" id="uc012erl.2">
    <molecule id="Q01815-1"/>
    <property type="organism name" value="mouse"/>
</dbReference>
<dbReference type="AGR" id="MGI:103013"/>
<dbReference type="CTD" id="775"/>
<dbReference type="MGI" id="MGI:103013">
    <property type="gene designation" value="Cacna1c"/>
</dbReference>
<dbReference type="VEuPathDB" id="HostDB:ENSMUSG00000051331"/>
<dbReference type="eggNOG" id="KOG2301">
    <property type="taxonomic scope" value="Eukaryota"/>
</dbReference>
<dbReference type="GeneTree" id="ENSGT00940000156127"/>
<dbReference type="InParanoid" id="Q01815"/>
<dbReference type="OrthoDB" id="431720at2759"/>
<dbReference type="PhylomeDB" id="Q01815"/>
<dbReference type="Reactome" id="R-MMU-422356">
    <property type="pathway name" value="Regulation of insulin secretion"/>
</dbReference>
<dbReference type="Reactome" id="R-MMU-5576892">
    <property type="pathway name" value="Phase 0 - rapid depolarisation"/>
</dbReference>
<dbReference type="Reactome" id="R-MMU-5576893">
    <property type="pathway name" value="Phase 2 - plateau phase"/>
</dbReference>
<dbReference type="BioGRID-ORCS" id="12288">
    <property type="hits" value="1 hit in 74 CRISPR screens"/>
</dbReference>
<dbReference type="ChiTaRS" id="Cacna1c">
    <property type="organism name" value="mouse"/>
</dbReference>
<dbReference type="PRO" id="PR:Q01815"/>
<dbReference type="Proteomes" id="UP000000589">
    <property type="component" value="Chromosome 6"/>
</dbReference>
<dbReference type="RNAct" id="Q01815">
    <property type="molecule type" value="protein"/>
</dbReference>
<dbReference type="Bgee" id="ENSMUSG00000051331">
    <property type="expression patterns" value="Expressed in cardiac muscle of left ventricle and 175 other cell types or tissues"/>
</dbReference>
<dbReference type="ExpressionAtlas" id="Q01815">
    <property type="expression patterns" value="baseline and differential"/>
</dbReference>
<dbReference type="GO" id="GO:0002095">
    <property type="term" value="C:caveolar macromolecular signaling complex"/>
    <property type="evidence" value="ECO:0000314"/>
    <property type="project" value="MGI"/>
</dbReference>
<dbReference type="GO" id="GO:0043198">
    <property type="term" value="C:dendritic shaft"/>
    <property type="evidence" value="ECO:0000314"/>
    <property type="project" value="MGI"/>
</dbReference>
<dbReference type="GO" id="GO:1990454">
    <property type="term" value="C:L-type voltage-gated calcium channel complex"/>
    <property type="evidence" value="ECO:0000250"/>
    <property type="project" value="UniProtKB"/>
</dbReference>
<dbReference type="GO" id="GO:0016020">
    <property type="term" value="C:membrane"/>
    <property type="evidence" value="ECO:0000314"/>
    <property type="project" value="MGI"/>
</dbReference>
<dbReference type="GO" id="GO:0043025">
    <property type="term" value="C:neuronal cell body"/>
    <property type="evidence" value="ECO:0000314"/>
    <property type="project" value="MGI"/>
</dbReference>
<dbReference type="GO" id="GO:0043204">
    <property type="term" value="C:perikaryon"/>
    <property type="evidence" value="ECO:0007669"/>
    <property type="project" value="UniProtKB-SubCell"/>
</dbReference>
<dbReference type="GO" id="GO:0005886">
    <property type="term" value="C:plasma membrane"/>
    <property type="evidence" value="ECO:0000314"/>
    <property type="project" value="MGI"/>
</dbReference>
<dbReference type="GO" id="GO:0098839">
    <property type="term" value="C:postsynaptic density membrane"/>
    <property type="evidence" value="ECO:0007669"/>
    <property type="project" value="UniProtKB-SubCell"/>
</dbReference>
<dbReference type="GO" id="GO:0030315">
    <property type="term" value="C:T-tubule"/>
    <property type="evidence" value="ECO:0000314"/>
    <property type="project" value="MGI"/>
</dbReference>
<dbReference type="GO" id="GO:0005891">
    <property type="term" value="C:voltage-gated calcium channel complex"/>
    <property type="evidence" value="ECO:0000315"/>
    <property type="project" value="MGI"/>
</dbReference>
<dbReference type="GO" id="GO:0030018">
    <property type="term" value="C:Z disc"/>
    <property type="evidence" value="ECO:0000314"/>
    <property type="project" value="MGI"/>
</dbReference>
<dbReference type="GO" id="GO:0051393">
    <property type="term" value="F:alpha-actinin binding"/>
    <property type="evidence" value="ECO:0000250"/>
    <property type="project" value="BHF-UCL"/>
</dbReference>
<dbReference type="GO" id="GO:0005516">
    <property type="term" value="F:calmodulin binding"/>
    <property type="evidence" value="ECO:0007669"/>
    <property type="project" value="UniProtKB-KW"/>
</dbReference>
<dbReference type="GO" id="GO:0019899">
    <property type="term" value="F:enzyme binding"/>
    <property type="evidence" value="ECO:0000353"/>
    <property type="project" value="BHF-UCL"/>
</dbReference>
<dbReference type="GO" id="GO:0008331">
    <property type="term" value="F:high voltage-gated calcium channel activity"/>
    <property type="evidence" value="ECO:0000250"/>
    <property type="project" value="UniProtKB"/>
</dbReference>
<dbReference type="GO" id="GO:0046872">
    <property type="term" value="F:metal ion binding"/>
    <property type="evidence" value="ECO:0007669"/>
    <property type="project" value="UniProtKB-KW"/>
</dbReference>
<dbReference type="GO" id="GO:0005245">
    <property type="term" value="F:voltage-gated calcium channel activity"/>
    <property type="evidence" value="ECO:0000314"/>
    <property type="project" value="UniProtKB"/>
</dbReference>
<dbReference type="GO" id="GO:0086056">
    <property type="term" value="F:voltage-gated calcium channel activity involved in AV node cell action potential"/>
    <property type="evidence" value="ECO:0000250"/>
    <property type="project" value="BHF-UCL"/>
</dbReference>
<dbReference type="GO" id="GO:0086007">
    <property type="term" value="F:voltage-gated calcium channel activity involved in cardiac muscle cell action potential"/>
    <property type="evidence" value="ECO:0000314"/>
    <property type="project" value="MGI"/>
</dbReference>
<dbReference type="GO" id="GO:0007628">
    <property type="term" value="P:adult walking behavior"/>
    <property type="evidence" value="ECO:0000316"/>
    <property type="project" value="MGI"/>
</dbReference>
<dbReference type="GO" id="GO:0098703">
    <property type="term" value="P:calcium ion import across plasma membrane"/>
    <property type="evidence" value="ECO:0000314"/>
    <property type="project" value="MGI"/>
</dbReference>
<dbReference type="GO" id="GO:0070588">
    <property type="term" value="P:calcium ion transmembrane transport"/>
    <property type="evidence" value="ECO:0000250"/>
    <property type="project" value="ComplexPortal"/>
</dbReference>
<dbReference type="GO" id="GO:0061577">
    <property type="term" value="P:calcium ion transmembrane transport via high voltage-gated calcium channel"/>
    <property type="evidence" value="ECO:0000250"/>
    <property type="project" value="UniProtKB"/>
</dbReference>
<dbReference type="GO" id="GO:0006816">
    <property type="term" value="P:calcium ion transport"/>
    <property type="evidence" value="ECO:0000314"/>
    <property type="project" value="MGI"/>
</dbReference>
<dbReference type="GO" id="GO:0060402">
    <property type="term" value="P:calcium ion transport into cytosol"/>
    <property type="evidence" value="ECO:0000250"/>
    <property type="project" value="UniProtKB"/>
</dbReference>
<dbReference type="GO" id="GO:0017156">
    <property type="term" value="P:calcium-ion regulated exocytosis"/>
    <property type="evidence" value="ECO:0000315"/>
    <property type="project" value="MGI"/>
</dbReference>
<dbReference type="GO" id="GO:0061337">
    <property type="term" value="P:cardiac conduction"/>
    <property type="evidence" value="ECO:0000250"/>
    <property type="project" value="UniProtKB"/>
</dbReference>
<dbReference type="GO" id="GO:0086002">
    <property type="term" value="P:cardiac muscle cell action potential involved in contraction"/>
    <property type="evidence" value="ECO:0000250"/>
    <property type="project" value="BHF-UCL"/>
</dbReference>
<dbReference type="GO" id="GO:0086065">
    <property type="term" value="P:cell communication involved in cardiac conduction"/>
    <property type="evidence" value="ECO:0000314"/>
    <property type="project" value="MGI"/>
</dbReference>
<dbReference type="GO" id="GO:0007268">
    <property type="term" value="P:chemical synaptic transmission"/>
    <property type="evidence" value="ECO:0000315"/>
    <property type="project" value="MGI"/>
</dbReference>
<dbReference type="GO" id="GO:0051649">
    <property type="term" value="P:establishment of localization in cell"/>
    <property type="evidence" value="ECO:0000314"/>
    <property type="project" value="MGI"/>
</dbReference>
<dbReference type="GO" id="GO:0042593">
    <property type="term" value="P:glucose homeostasis"/>
    <property type="evidence" value="ECO:0000315"/>
    <property type="project" value="MGI"/>
</dbReference>
<dbReference type="GO" id="GO:0030252">
    <property type="term" value="P:growth hormone secretion"/>
    <property type="evidence" value="ECO:0000314"/>
    <property type="project" value="MGI"/>
</dbReference>
<dbReference type="GO" id="GO:0030073">
    <property type="term" value="P:insulin secretion"/>
    <property type="evidence" value="ECO:0000315"/>
    <property type="project" value="MGI"/>
</dbReference>
<dbReference type="GO" id="GO:0006874">
    <property type="term" value="P:intracellular calcium ion homeostasis"/>
    <property type="evidence" value="ECO:0000315"/>
    <property type="project" value="MGI"/>
</dbReference>
<dbReference type="GO" id="GO:0098912">
    <property type="term" value="P:membrane depolarization during atrial cardiac muscle cell action potential"/>
    <property type="evidence" value="ECO:0000250"/>
    <property type="project" value="BHF-UCL"/>
</dbReference>
<dbReference type="GO" id="GO:0086045">
    <property type="term" value="P:membrane depolarization during AV node cell action potential"/>
    <property type="evidence" value="ECO:0000250"/>
    <property type="project" value="BHF-UCL"/>
</dbReference>
<dbReference type="GO" id="GO:0086012">
    <property type="term" value="P:membrane depolarization during cardiac muscle cell action potential"/>
    <property type="evidence" value="ECO:0000250"/>
    <property type="project" value="BHF-UCL"/>
</dbReference>
<dbReference type="GO" id="GO:0045762">
    <property type="term" value="P:positive regulation of adenylate cyclase activity"/>
    <property type="evidence" value="ECO:0000314"/>
    <property type="project" value="UniProtKB"/>
</dbReference>
<dbReference type="GO" id="GO:0045933">
    <property type="term" value="P:positive regulation of muscle contraction"/>
    <property type="evidence" value="ECO:0000303"/>
    <property type="project" value="ComplexPortal"/>
</dbReference>
<dbReference type="GO" id="GO:0008217">
    <property type="term" value="P:regulation of blood pressure"/>
    <property type="evidence" value="ECO:0000315"/>
    <property type="project" value="MGI"/>
</dbReference>
<dbReference type="GO" id="GO:0010881">
    <property type="term" value="P:regulation of cardiac muscle contraction by regulation of the release of sequestered calcium ion"/>
    <property type="evidence" value="ECO:0000250"/>
    <property type="project" value="UniProtKB"/>
</dbReference>
<dbReference type="GO" id="GO:0086091">
    <property type="term" value="P:regulation of heart rate by cardiac conduction"/>
    <property type="evidence" value="ECO:0000250"/>
    <property type="project" value="BHF-UCL"/>
</dbReference>
<dbReference type="GO" id="GO:0046620">
    <property type="term" value="P:regulation of organ growth"/>
    <property type="evidence" value="ECO:0000315"/>
    <property type="project" value="MGI"/>
</dbReference>
<dbReference type="GO" id="GO:0019229">
    <property type="term" value="P:regulation of vasoconstriction"/>
    <property type="evidence" value="ECO:0000315"/>
    <property type="project" value="MGI"/>
</dbReference>
<dbReference type="GO" id="GO:0098911">
    <property type="term" value="P:regulation of ventricular cardiac muscle cell action potential"/>
    <property type="evidence" value="ECO:0000250"/>
    <property type="project" value="BHF-UCL"/>
</dbReference>
<dbReference type="GO" id="GO:0006939">
    <property type="term" value="P:smooth muscle contraction"/>
    <property type="evidence" value="ECO:0000315"/>
    <property type="project" value="MGI"/>
</dbReference>
<dbReference type="GO" id="GO:0060083">
    <property type="term" value="P:smooth muscle contraction involved in micturition"/>
    <property type="evidence" value="ECO:0000315"/>
    <property type="project" value="MGI"/>
</dbReference>
<dbReference type="GO" id="GO:0008542">
    <property type="term" value="P:visual learning"/>
    <property type="evidence" value="ECO:0000315"/>
    <property type="project" value="MGI"/>
</dbReference>
<dbReference type="FunFam" id="1.10.287.70:FF:000007">
    <property type="entry name" value="Voltage-dependent L-type calcium channel subunit alpha"/>
    <property type="match status" value="1"/>
</dbReference>
<dbReference type="FunFam" id="1.10.287.70:FF:000009">
    <property type="entry name" value="Voltage-dependent L-type calcium channel subunit alpha"/>
    <property type="match status" value="1"/>
</dbReference>
<dbReference type="FunFam" id="1.10.287.70:FF:000021">
    <property type="entry name" value="Voltage-dependent L-type calcium channel subunit alpha"/>
    <property type="match status" value="1"/>
</dbReference>
<dbReference type="FunFam" id="1.20.120.350:FF:000001">
    <property type="entry name" value="Voltage-dependent L-type calcium channel subunit alpha"/>
    <property type="match status" value="1"/>
</dbReference>
<dbReference type="FunFam" id="1.20.120.350:FF:000006">
    <property type="entry name" value="Voltage-dependent L-type calcium channel subunit alpha"/>
    <property type="match status" value="1"/>
</dbReference>
<dbReference type="FunFam" id="1.20.120.350:FF:000010">
    <property type="entry name" value="Voltage-dependent L-type calcium channel subunit alpha"/>
    <property type="match status" value="1"/>
</dbReference>
<dbReference type="FunFam" id="1.20.120.350:FF:000020">
    <property type="entry name" value="Voltage-dependent L-type calcium channel subunit alpha"/>
    <property type="match status" value="1"/>
</dbReference>
<dbReference type="FunFam" id="1.10.238.10:FF:000063">
    <property type="entry name" value="Voltage-dependent N-type calcium channel subunit alpha"/>
    <property type="match status" value="1"/>
</dbReference>
<dbReference type="Gene3D" id="1.10.287.70">
    <property type="match status" value="4"/>
</dbReference>
<dbReference type="Gene3D" id="6.10.250.2180">
    <property type="match status" value="1"/>
</dbReference>
<dbReference type="Gene3D" id="6.10.250.2500">
    <property type="match status" value="1"/>
</dbReference>
<dbReference type="Gene3D" id="1.20.120.350">
    <property type="entry name" value="Voltage-gated potassium channels. Chain C"/>
    <property type="match status" value="4"/>
</dbReference>
<dbReference type="InterPro" id="IPR031688">
    <property type="entry name" value="CAC1F_C"/>
</dbReference>
<dbReference type="InterPro" id="IPR031649">
    <property type="entry name" value="GPHH_dom"/>
</dbReference>
<dbReference type="InterPro" id="IPR005821">
    <property type="entry name" value="Ion_trans_dom"/>
</dbReference>
<dbReference type="InterPro" id="IPR014873">
    <property type="entry name" value="VDCC_a1su_IQ"/>
</dbReference>
<dbReference type="InterPro" id="IPR050599">
    <property type="entry name" value="VDCC_alpha-1_subunit"/>
</dbReference>
<dbReference type="InterPro" id="IPR005451">
    <property type="entry name" value="VDCC_L_a1csu"/>
</dbReference>
<dbReference type="InterPro" id="IPR005446">
    <property type="entry name" value="VDCC_L_a1su"/>
</dbReference>
<dbReference type="InterPro" id="IPR002077">
    <property type="entry name" value="VDCCAlpha1"/>
</dbReference>
<dbReference type="InterPro" id="IPR027359">
    <property type="entry name" value="Volt_channel_dom_sf"/>
</dbReference>
<dbReference type="PANTHER" id="PTHR45628">
    <property type="entry name" value="VOLTAGE-DEPENDENT CALCIUM CHANNEL TYPE A SUBUNIT ALPHA-1"/>
    <property type="match status" value="1"/>
</dbReference>
<dbReference type="PANTHER" id="PTHR45628:SF10">
    <property type="entry name" value="VOLTAGE-DEPENDENT L-TYPE CALCIUM CHANNEL SUBUNIT ALPHA-1C"/>
    <property type="match status" value="1"/>
</dbReference>
<dbReference type="Pfam" id="PF08763">
    <property type="entry name" value="Ca_chan_IQ"/>
    <property type="match status" value="1"/>
</dbReference>
<dbReference type="Pfam" id="PF16885">
    <property type="entry name" value="CAC1F_C"/>
    <property type="match status" value="1"/>
</dbReference>
<dbReference type="Pfam" id="PF16905">
    <property type="entry name" value="GPHH"/>
    <property type="match status" value="1"/>
</dbReference>
<dbReference type="Pfam" id="PF00520">
    <property type="entry name" value="Ion_trans"/>
    <property type="match status" value="4"/>
</dbReference>
<dbReference type="PRINTS" id="PR00167">
    <property type="entry name" value="CACHANNEL"/>
</dbReference>
<dbReference type="PRINTS" id="PR01630">
    <property type="entry name" value="LVDCCALPHA1"/>
</dbReference>
<dbReference type="PRINTS" id="PR01635">
    <property type="entry name" value="LVDCCALPHA1C"/>
</dbReference>
<dbReference type="SMART" id="SM01062">
    <property type="entry name" value="Ca_chan_IQ"/>
    <property type="match status" value="1"/>
</dbReference>
<dbReference type="SUPFAM" id="SSF81324">
    <property type="entry name" value="Voltage-gated potassium channels"/>
    <property type="match status" value="4"/>
</dbReference>
<evidence type="ECO:0000250" key="1">
    <source>
        <dbReference type="UniProtKB" id="P07293"/>
    </source>
</evidence>
<evidence type="ECO:0000250" key="2">
    <source>
        <dbReference type="UniProtKB" id="P15381"/>
    </source>
</evidence>
<evidence type="ECO:0000250" key="3">
    <source>
        <dbReference type="UniProtKB" id="P22002"/>
    </source>
</evidence>
<evidence type="ECO:0000250" key="4">
    <source>
        <dbReference type="UniProtKB" id="Q13936"/>
    </source>
</evidence>
<evidence type="ECO:0000255" key="5"/>
<evidence type="ECO:0000256" key="6">
    <source>
        <dbReference type="SAM" id="MobiDB-lite"/>
    </source>
</evidence>
<evidence type="ECO:0000269" key="7">
    <source>
    </source>
</evidence>
<evidence type="ECO:0000269" key="8">
    <source>
    </source>
</evidence>
<evidence type="ECO:0000269" key="9">
    <source>
    </source>
</evidence>
<evidence type="ECO:0000269" key="10">
    <source>
    </source>
</evidence>
<evidence type="ECO:0000269" key="11">
    <source>
    </source>
</evidence>
<evidence type="ECO:0000269" key="12">
    <source>
    </source>
</evidence>
<evidence type="ECO:0000269" key="13">
    <source>
    </source>
</evidence>
<evidence type="ECO:0000269" key="14">
    <source>
    </source>
</evidence>
<evidence type="ECO:0000269" key="15">
    <source>
    </source>
</evidence>
<evidence type="ECO:0000303" key="16">
    <source>
    </source>
</evidence>
<evidence type="ECO:0000303" key="17">
    <source>
    </source>
</evidence>
<evidence type="ECO:0000305" key="18"/>
<evidence type="ECO:0000305" key="19">
    <source>
    </source>
</evidence>
<evidence type="ECO:0007744" key="20">
    <source>
    </source>
</evidence>
<keyword id="KW-0025">Alternative splicing</keyword>
<keyword id="KW-0106">Calcium</keyword>
<keyword id="KW-0107">Calcium channel</keyword>
<keyword id="KW-0109">Calcium transport</keyword>
<keyword id="KW-0112">Calmodulin-binding</keyword>
<keyword id="KW-1003">Cell membrane</keyword>
<keyword id="KW-0966">Cell projection</keyword>
<keyword id="KW-1015">Disulfide bond</keyword>
<keyword id="KW-0325">Glycoprotein</keyword>
<keyword id="KW-0407">Ion channel</keyword>
<keyword id="KW-0406">Ion transport</keyword>
<keyword id="KW-0472">Membrane</keyword>
<keyword id="KW-0479">Metal-binding</keyword>
<keyword id="KW-0597">Phosphoprotein</keyword>
<keyword id="KW-0628">Postsynaptic cell membrane</keyword>
<keyword id="KW-1185">Reference proteome</keyword>
<keyword id="KW-0677">Repeat</keyword>
<keyword id="KW-0770">Synapse</keyword>
<keyword id="KW-0812">Transmembrane</keyword>
<keyword id="KW-1133">Transmembrane helix</keyword>
<keyword id="KW-0813">Transport</keyword>
<keyword id="KW-0851">Voltage-gated channel</keyword>
<sequence>MVNENTRMYVPEENHQGSNYGSPRPAHANMNANAAAGLAPEHIPTPGAALSWQAAIDAARQAKLMGSAGNATISTVSSTQRKRQQYGKPKKQGGTTATRPPRALLCLTLKNPIRRACISIVEWKPFEIIILLTIFANCVALAIYIPFPEDDSNATNSNLERVEYLFLIIFTVEAFLKVIAYGLLFHPNAYLRNGWNLLDFIIVVVGLFSAILEQATKADGANALGGKGAGFDVKALRAFRVLRPLRLVSGVPSLQVVLNSIIKAMVPLLHIALLVLFVIIIYAIIGLELFMGKMHKTCYNQEGIIDVPAEEDPSPCALETGHGRQCQNGTVCKPGWDGPKHGITNFDNFAFAMLTVFQCITMEGWTDVLYWMQDAMGYELPWVYFVSLVIFGSFFVLNLVLGVLSGEFSKEREKAKARGDFQKLREKQQLEEDLKGYLDWITQAEDIDPENEDEGMDEDKPRNMSMPTSETESVNTENVAGGDIEGENCGARLAHRISKSKFSRYWRRWNRFCRRKCRAAVKSNVFYWLVIFLVFLNTLTIASEHYNQPHWLTEVQDTANKALLALFTAEMLLKMYSLGLQAYFVSLFNRFDCFIVCGGILETILVETKIMSPLGISVLRCVRLLRIFKITRYWNSLSNLVASLLNSVRSIASLLLLLFLFIIIFSLLGMQLFGGKFNFDEMQTRRSTFDNFPQSLLTVFQILTGEDWNSVMYDGIMAYGGPSFPGMLVCIYFIILFICGNYILLNVFLAIAVDNLADAESLTSAQKEEEEEKERKKLARTASPEKKQEVMEKPAVEESKEEKIELKSITADGESPPTTKINMDDLQPSENEDKSPHSNPDTAGEEDEEEPEMPVGPRPRPLSELHLKEKAVPMPEASAFFIFSPNNRFRLQCHRIVNDTIFTNLILFFILLSSISLAAEDPVQHTSFRNHILGNADYVFTSIFTLEIILKMTAYGAFLHKGSFCRNYFNILDLLVVSVSLISFGIQSSAINVVKILRVLRVLRPLRAINRAKGLKHVVQCVFVAIRTIGNIVIVTTLLQFMFACIGVQLFKGKLYTCSDSSKQTEAECKGNYITYKDGEVDHPIIQPRSWENSKFDFDNVLAAMMALFTVSTFEGWPELLYRSIDSHTEDKGPIYNYRVEISIFFIIYIIIIAFFMMNIFVGFVIVTFQEQGEQEYKNCELDKNQRQCVEYALKARPLRRYIPKNQHQYKVWYVVNSTYFEYLMFVLILLNTICLAMQHYGQSCLFKIAMNILNMLFTGLFTVEMILKLIAFKPKGYFSDPWNVFDFLIVIGSIIDVILSETNPAEHTQCSPSMSAEENSRISITFFRLFRVMRLVKLLSRGEGIRTLLWTFIKSFQALPYVALLIVMLFFIYAVIGMQVFGKIALNDTTEINRNNNFQTFPQAVLLLFRCATGEAWQDIMLACMPGKKCAPESEPSNSTEGETPCGSSFAVFYFISFYMLCAFLIINLFVAVIMDNFDYLTRDWSILGPHHLDEFKRIWAEYDPEAKGRIKHLDVVTLLRRIQPPLGFGKLCPHRVACKRLVSMNMPLNSDGTVMFNATLFALVRTALRIKTEGNLEQANEELRAIIKKIWKRTSMKLLDQVVPPAGDDEVTVGKFYATFLIQEYFRKFKKRKEQGLVGKPSQRNALSLQAGLRTLHDIGPEIRRAISGDLTAEEELDKAMKEAVSAASEDDIFRRAGGLFGNHVTYYQSDSRGNFPQTFATQRPLHINKTGNNQADTESPSHEKLVDSTFTPSSYSSTGSNANINNANNTALGRFPHPAGYSSTVSTVEGHGPPLSPAVRVQEAAWKLSSKRCHSRESQGATVNQEIFPDETRSVRMSEEAEYCSEPSLLSTDMFSYQEDEHRQLTCPEEDKREIQPSPKRSFLRSASLGRRASFHLECLKRQKDQGGDISQKTALPLHLVHHQALAVAGLSPLLQRSHSPTTFPRPCPTPPVTPGSRGRPLRPIPTLRLEGAESSEKLNSSFPSIHCSSWSEETTACSGSSSMARRARPVSLTVPSQAGAPGRQFHGSASSLVEAVLISEGLGQFAQDPKFIEVTTQELADACDMTIEEMENAADNILSGGAQQSPNGTLLPFVNCRDPGQDRAVAPEDESCAYALGRGRSEEALADSRSYVSNL</sequence>
<comment type="function">
    <text evidence="2 7 9 10 12 14 15 18">Pore-forming, alpha-1C subunit of the voltage-gated calcium channel that gives rise to L-type calcium currents (PubMed:14609949, PubMed:18586882, PubMed:21216955, PubMed:25368181, PubMed:28119464, PubMed:10973973). Mediates influx of calcium ions into the cytoplasm, and thereby triggers calcium release from the sarcoplasm (By similarity). Plays an important role in excitation-contraction coupling in the heart. Required for normal heart development and normal regulation of heart rhythm (PubMed:21216955). Required for normal contraction of smooth muscle cells in blood vessels and in the intestine. Essential for normal blood pressure regulation via its role in the contraction of arterial smooth muscle cells (PubMed:14609949, PubMed:28119464). Long-lasting (L-type) calcium channels belong to the 'high-voltage activated' (HVA) group (Probable).</text>
</comment>
<comment type="catalytic activity">
    <reaction evidence="7 9 10 12 14 15">
        <text>Ca(2+)(in) = Ca(2+)(out)</text>
        <dbReference type="Rhea" id="RHEA:29671"/>
        <dbReference type="ChEBI" id="CHEBI:29108"/>
    </reaction>
</comment>
<comment type="activity regulation">
    <text evidence="2 4 9 12">Inhibited by dihydropyridines (DHP), such as isradipine (PubMed:14609949, PubMed:21216955). Inhibited by nifedipine. Channel activity is regulated by Ca(2+) and calmodulin. Binding of STAC1, STAC2 or STAC3 to a region that overlaps with the calmodulin binding site inhibits channel inactivation by Ca(2+) and calmodulin (By similarity). Binding of calmodulin or CABP1 at the same regulatory sites results in opposite effects on the channel function. Shear stress and pressure increases calcium channel activity (By similarity).</text>
</comment>
<comment type="subunit">
    <text evidence="2 4 10 11">Component of a calcium channel complex consisting of a pore-forming alpha subunit (CACNA1C) and ancillary beta, gamma and delta subunits. The channel complex contains alpha, beta, gamma and delta subunits in a 1:1:1:1 ratio, i.e. it contains only one of each type of subunit. CACNA1C channel activity is modulated by ancillary subunits, such as CACNB1, CACNB2, CACNB3, CACNA2D1 and CACNA2D4 (By similarity). Interacts with the gamma subunits CACNG4, CACNG6, CACNG7 and CACNG8 (By similarity). Interacts with CACNB1 (By similarity). Interacts with CACNB2. Identified in a complex with CACNA2D4 and CACNB3. Interacts with CACNB3. Interacts with CACNA2D1. Interacts with CACNA2D4. Interacts with CALM1. Interacts (via the N-terminus and the C-terminal C and IQ motifs) with CABP1; this inhibits Ca(2+)-dependent channel inactivation. The binding via the C motif is calcium independent whereas the binding via IQ requires the presence of calcium and is mutually exclusive with calmodulin binding (By similarity). The binding to the cytoplasmic N-terminal domain is calcium independent but is essential for the channel modulation (By similarity). Interacts (via C-terminal CDB motif) with CABP5; in a calcium-dependent manner (PubMed:18586882). Interacts with CIB1; the interaction increases upon cardiomyocytes hypertrophy (PubMed:20639889). Interacts with STAC2 and STAC3; this inhibits channel inactivation (By similarity).</text>
</comment>
<comment type="interaction">
    <interactant intactId="EBI-644904">
        <id>Q01815</id>
    </interactant>
    <interactant intactId="EBI-298576">
        <id>P51637</id>
        <label>Cav3</label>
    </interactant>
    <organismsDiffer>false</organismsDiffer>
    <experiments>4</experiments>
</comment>
<comment type="subcellular location">
    <subcellularLocation>
        <location evidence="9 10 12">Cell membrane</location>
        <topology evidence="18">Multi-pass membrane protein</topology>
    </subcellularLocation>
    <subcellularLocation>
        <location evidence="14 15">Cell membrane</location>
        <location evidence="14 15">Sarcolemma</location>
        <topology evidence="18">Multi-pass membrane protein</topology>
    </subcellularLocation>
    <subcellularLocation>
        <location evidence="3">Perikaryon</location>
    </subcellularLocation>
    <subcellularLocation>
        <location evidence="3">Postsynaptic density membrane</location>
    </subcellularLocation>
    <subcellularLocation>
        <location evidence="3">Cell projection</location>
        <location evidence="3">Dendrite</location>
    </subcellularLocation>
    <subcellularLocation>
        <location evidence="13">Cell membrane</location>
        <location evidence="13">Sarcolemma</location>
        <location evidence="13">T-tubule</location>
    </subcellularLocation>
    <text evidence="2 13">Colocalizes with ryanodine receptors in distinct clusters at the junctional membrane, where the sarcolemma and the sarcoplasmic reticulum are in close contact. The interaction between RRAD and CACNB2 promotes the expression of CACNA1C at the cell membrane. Localized in T-tubules, as shown in SERCA2-knockout cardiomyocytes (PubMed:22355118).</text>
</comment>
<comment type="alternative products">
    <event type="alternative splicing"/>
    <isoform>
        <id>Q01815-1</id>
        <name>1</name>
        <name>CACH2A</name>
        <sequence type="displayed"/>
    </isoform>
    <isoform>
        <id>Q01815-2</id>
        <name>2</name>
        <name>CACH2D</name>
        <sequence type="described" ref="VSP_000900 VSP_000901"/>
    </isoform>
    <isoform>
        <id>Q01815-3</id>
        <name>3</name>
        <name>Truncated</name>
        <sequence type="described" ref="VSP_000896 VSP_000897 VSP_000898 VSP_000899 VSP_000901"/>
    </isoform>
    <text>Additional isoforms seem to exist.</text>
</comment>
<comment type="tissue specificity">
    <text evidence="7 8 9 10 12">Detected in embryonic heart (PubMed:10973973, PubMed:21216955). Detected in retina in rod bipolar cells (PubMed:18586882). Detected in tibialis artery (at protein level) (PubMed:14609949). Detected in smooth muscle cells from tibialis artery and in mesenteric artery (PubMed:14609949). High expression in heart, followed by brain and spinal cord (PubMed:1385406).</text>
</comment>
<comment type="domain">
    <text>Each of the four internal repeats contains five hydrophobic transmembrane segments (S1, S2, S3, S5, S6) and one positively charged transmembrane segment (S4). S4 segments probably represent the voltage-sensor and are characterized by a series of positively charged amino acids at every third position.</text>
</comment>
<comment type="domain">
    <text evidence="2">Binding of intracellular calcium through the EF-hand motif inhibits the opening of the channel.</text>
</comment>
<comment type="PTM">
    <text evidence="15">Phosphorylation by PKA at Ser-1897 activates the channel (PubMed:28119464). Elevated levels of blood glucose lead to increased phosphorylation by PKA.</text>
</comment>
<comment type="disruption phenotype">
    <text evidence="7">Mutant embryos appear normal and have normal heartbeat at 12.5 dpc. All are dead by 14.5 dpc.</text>
</comment>
<comment type="similarity">
    <text evidence="18">Belongs to the calcium channel alpha-1 subunit (TC 1.A.1.11) family. CACNA1C subfamily.</text>
</comment>
<accession>Q01815</accession>
<accession>Q04476</accession>
<accession>Q61242</accession>
<accession>Q99242</accession>
<proteinExistence type="evidence at protein level"/>
<organism>
    <name type="scientific">Mus musculus</name>
    <name type="common">Mouse</name>
    <dbReference type="NCBI Taxonomy" id="10090"/>
    <lineage>
        <taxon>Eukaryota</taxon>
        <taxon>Metazoa</taxon>
        <taxon>Chordata</taxon>
        <taxon>Craniata</taxon>
        <taxon>Vertebrata</taxon>
        <taxon>Euteleostomi</taxon>
        <taxon>Mammalia</taxon>
        <taxon>Eutheria</taxon>
        <taxon>Euarchontoglires</taxon>
        <taxon>Glires</taxon>
        <taxon>Rodentia</taxon>
        <taxon>Myomorpha</taxon>
        <taxon>Muroidea</taxon>
        <taxon>Muridae</taxon>
        <taxon>Murinae</taxon>
        <taxon>Mus</taxon>
        <taxon>Mus</taxon>
    </lineage>
</organism>